<reference key="1">
    <citation type="journal article" date="2007" name="J. Bacteriol.">
        <title>The complete genome sequence of Roseobacter denitrificans reveals a mixotrophic rather than photosynthetic metabolism.</title>
        <authorList>
            <person name="Swingley W.D."/>
            <person name="Sadekar S."/>
            <person name="Mastrian S.D."/>
            <person name="Matthies H.J."/>
            <person name="Hao J."/>
            <person name="Ramos H."/>
            <person name="Acharya C.R."/>
            <person name="Conrad A.L."/>
            <person name="Taylor H.L."/>
            <person name="Dejesa L.C."/>
            <person name="Shah M.K."/>
            <person name="O'Huallachain M.E."/>
            <person name="Lince M.T."/>
            <person name="Blankenship R.E."/>
            <person name="Beatty J.T."/>
            <person name="Touchman J.W."/>
        </authorList>
    </citation>
    <scope>NUCLEOTIDE SEQUENCE [LARGE SCALE GENOMIC DNA]</scope>
    <source>
        <strain>ATCC 33942 / OCh 114</strain>
    </source>
</reference>
<sequence length="160" mass="16586">MKLHELSDNDGAAKKRKRVGRGPGSGTGKMGGRGIKGQKSRSGVAIKGYEGGQMPLYQRLPKRGFNKPNRKAYAVVNLGLIQKFVDAGKIDASAAITEDALIASGLVRRKKDGIRVLAKGDVTGKLNIEVTGASKSAIEAVAKAGGSLTVTAPVAETSEA</sequence>
<proteinExistence type="inferred from homology"/>
<accession>Q16AC4</accession>
<dbReference type="EMBL" id="CP000362">
    <property type="protein sequence ID" value="ABG31069.1"/>
    <property type="molecule type" value="Genomic_DNA"/>
</dbReference>
<dbReference type="RefSeq" id="WP_011567689.1">
    <property type="nucleotide sequence ID" value="NC_008209.1"/>
</dbReference>
<dbReference type="SMR" id="Q16AC4"/>
<dbReference type="STRING" id="375451.RD1_1431"/>
<dbReference type="KEGG" id="rde:RD1_1431"/>
<dbReference type="eggNOG" id="COG0200">
    <property type="taxonomic scope" value="Bacteria"/>
</dbReference>
<dbReference type="HOGENOM" id="CLU_055188_4_0_5"/>
<dbReference type="OrthoDB" id="9810293at2"/>
<dbReference type="Proteomes" id="UP000007029">
    <property type="component" value="Chromosome"/>
</dbReference>
<dbReference type="GO" id="GO:0022625">
    <property type="term" value="C:cytosolic large ribosomal subunit"/>
    <property type="evidence" value="ECO:0007669"/>
    <property type="project" value="TreeGrafter"/>
</dbReference>
<dbReference type="GO" id="GO:0019843">
    <property type="term" value="F:rRNA binding"/>
    <property type="evidence" value="ECO:0007669"/>
    <property type="project" value="UniProtKB-UniRule"/>
</dbReference>
<dbReference type="GO" id="GO:0003735">
    <property type="term" value="F:structural constituent of ribosome"/>
    <property type="evidence" value="ECO:0007669"/>
    <property type="project" value="InterPro"/>
</dbReference>
<dbReference type="GO" id="GO:0006412">
    <property type="term" value="P:translation"/>
    <property type="evidence" value="ECO:0007669"/>
    <property type="project" value="UniProtKB-UniRule"/>
</dbReference>
<dbReference type="Gene3D" id="3.100.10.10">
    <property type="match status" value="1"/>
</dbReference>
<dbReference type="HAMAP" id="MF_01341">
    <property type="entry name" value="Ribosomal_uL15"/>
    <property type="match status" value="1"/>
</dbReference>
<dbReference type="InterPro" id="IPR030878">
    <property type="entry name" value="Ribosomal_uL15"/>
</dbReference>
<dbReference type="InterPro" id="IPR021131">
    <property type="entry name" value="Ribosomal_uL15/eL18"/>
</dbReference>
<dbReference type="InterPro" id="IPR036227">
    <property type="entry name" value="Ribosomal_uL15/eL18_sf"/>
</dbReference>
<dbReference type="InterPro" id="IPR005749">
    <property type="entry name" value="Ribosomal_uL15_bac-type"/>
</dbReference>
<dbReference type="InterPro" id="IPR001196">
    <property type="entry name" value="Ribosomal_uL15_CS"/>
</dbReference>
<dbReference type="NCBIfam" id="TIGR01071">
    <property type="entry name" value="rplO_bact"/>
    <property type="match status" value="1"/>
</dbReference>
<dbReference type="PANTHER" id="PTHR12934">
    <property type="entry name" value="50S RIBOSOMAL PROTEIN L15"/>
    <property type="match status" value="1"/>
</dbReference>
<dbReference type="PANTHER" id="PTHR12934:SF11">
    <property type="entry name" value="LARGE RIBOSOMAL SUBUNIT PROTEIN UL15M"/>
    <property type="match status" value="1"/>
</dbReference>
<dbReference type="Pfam" id="PF00828">
    <property type="entry name" value="Ribosomal_L27A"/>
    <property type="match status" value="1"/>
</dbReference>
<dbReference type="SUPFAM" id="SSF52080">
    <property type="entry name" value="Ribosomal proteins L15p and L18e"/>
    <property type="match status" value="1"/>
</dbReference>
<dbReference type="PROSITE" id="PS00475">
    <property type="entry name" value="RIBOSOMAL_L15"/>
    <property type="match status" value="1"/>
</dbReference>
<name>RL15_ROSDO</name>
<feature type="chain" id="PRO_0000251556" description="Large ribosomal subunit protein uL15">
    <location>
        <begin position="1"/>
        <end position="160"/>
    </location>
</feature>
<feature type="region of interest" description="Disordered" evidence="2">
    <location>
        <begin position="1"/>
        <end position="42"/>
    </location>
</feature>
<feature type="compositionally biased region" description="Basic and acidic residues" evidence="2">
    <location>
        <begin position="1"/>
        <end position="13"/>
    </location>
</feature>
<feature type="compositionally biased region" description="Gly residues" evidence="2">
    <location>
        <begin position="21"/>
        <end position="35"/>
    </location>
</feature>
<evidence type="ECO:0000255" key="1">
    <source>
        <dbReference type="HAMAP-Rule" id="MF_01341"/>
    </source>
</evidence>
<evidence type="ECO:0000256" key="2">
    <source>
        <dbReference type="SAM" id="MobiDB-lite"/>
    </source>
</evidence>
<evidence type="ECO:0000305" key="3"/>
<protein>
    <recommendedName>
        <fullName evidence="1">Large ribosomal subunit protein uL15</fullName>
    </recommendedName>
    <alternativeName>
        <fullName evidence="3">50S ribosomal protein L15</fullName>
    </alternativeName>
</protein>
<organism>
    <name type="scientific">Roseobacter denitrificans (strain ATCC 33942 / OCh 114)</name>
    <name type="common">Erythrobacter sp. (strain OCh 114)</name>
    <name type="synonym">Roseobacter denitrificans</name>
    <dbReference type="NCBI Taxonomy" id="375451"/>
    <lineage>
        <taxon>Bacteria</taxon>
        <taxon>Pseudomonadati</taxon>
        <taxon>Pseudomonadota</taxon>
        <taxon>Alphaproteobacteria</taxon>
        <taxon>Rhodobacterales</taxon>
        <taxon>Roseobacteraceae</taxon>
        <taxon>Roseobacter</taxon>
    </lineage>
</organism>
<comment type="function">
    <text evidence="1">Binds to the 23S rRNA.</text>
</comment>
<comment type="subunit">
    <text evidence="1">Part of the 50S ribosomal subunit.</text>
</comment>
<comment type="similarity">
    <text evidence="1">Belongs to the universal ribosomal protein uL15 family.</text>
</comment>
<keyword id="KW-1185">Reference proteome</keyword>
<keyword id="KW-0687">Ribonucleoprotein</keyword>
<keyword id="KW-0689">Ribosomal protein</keyword>
<keyword id="KW-0694">RNA-binding</keyword>
<keyword id="KW-0699">rRNA-binding</keyword>
<gene>
    <name evidence="1" type="primary">rplO</name>
    <name type="ordered locus">RD1_1431</name>
</gene>